<protein>
    <recommendedName>
        <fullName evidence="1">Small ribosomal subunit protein uS10</fullName>
    </recommendedName>
    <alternativeName>
        <fullName evidence="2">30S ribosomal protein S10</fullName>
    </alternativeName>
</protein>
<organism>
    <name type="scientific">Staphylococcus aureus (strain MW2)</name>
    <dbReference type="NCBI Taxonomy" id="196620"/>
    <lineage>
        <taxon>Bacteria</taxon>
        <taxon>Bacillati</taxon>
        <taxon>Bacillota</taxon>
        <taxon>Bacilli</taxon>
        <taxon>Bacillales</taxon>
        <taxon>Staphylococcaceae</taxon>
        <taxon>Staphylococcus</taxon>
    </lineage>
</organism>
<evidence type="ECO:0000255" key="1">
    <source>
        <dbReference type="HAMAP-Rule" id="MF_00508"/>
    </source>
</evidence>
<evidence type="ECO:0000305" key="2"/>
<sequence length="102" mass="11576">MAKQKIRIRLKAYDHRVIDQSAEKIVETAKRSGADVSGPIPLPTEKSVYTIIRAVHKYKDSREQFEQRTHKRLIDIVNPTPKTVDALMGLNLPSGVDIEIKL</sequence>
<keyword id="KW-0002">3D-structure</keyword>
<keyword id="KW-0687">Ribonucleoprotein</keyword>
<keyword id="KW-0689">Ribosomal protein</keyword>
<proteinExistence type="evidence at protein level"/>
<dbReference type="EMBL" id="BA000033">
    <property type="protein sequence ID" value="BAB96035.1"/>
    <property type="molecule type" value="Genomic_DNA"/>
</dbReference>
<dbReference type="RefSeq" id="WP_001118667.1">
    <property type="nucleotide sequence ID" value="NC_003923.1"/>
</dbReference>
<dbReference type="PDB" id="8Y38">
    <property type="method" value="EM"/>
    <property type="resolution" value="2.58 A"/>
    <property type="chains" value="j=1-102"/>
</dbReference>
<dbReference type="PDB" id="8Y39">
    <property type="method" value="EM"/>
    <property type="resolution" value="3.60 A"/>
    <property type="chains" value="j=1-102"/>
</dbReference>
<dbReference type="PDBsum" id="8Y38"/>
<dbReference type="PDBsum" id="8Y39"/>
<dbReference type="EMDB" id="EMD-38875"/>
<dbReference type="EMDB" id="EMD-38876"/>
<dbReference type="SMR" id="P66335"/>
<dbReference type="GeneID" id="98346563"/>
<dbReference type="KEGG" id="sam:MW2170"/>
<dbReference type="HOGENOM" id="CLU_122625_1_3_9"/>
<dbReference type="GO" id="GO:1990904">
    <property type="term" value="C:ribonucleoprotein complex"/>
    <property type="evidence" value="ECO:0007669"/>
    <property type="project" value="UniProtKB-KW"/>
</dbReference>
<dbReference type="GO" id="GO:0005840">
    <property type="term" value="C:ribosome"/>
    <property type="evidence" value="ECO:0007669"/>
    <property type="project" value="UniProtKB-KW"/>
</dbReference>
<dbReference type="GO" id="GO:0003735">
    <property type="term" value="F:structural constituent of ribosome"/>
    <property type="evidence" value="ECO:0007669"/>
    <property type="project" value="InterPro"/>
</dbReference>
<dbReference type="GO" id="GO:0000049">
    <property type="term" value="F:tRNA binding"/>
    <property type="evidence" value="ECO:0007669"/>
    <property type="project" value="UniProtKB-UniRule"/>
</dbReference>
<dbReference type="GO" id="GO:0006412">
    <property type="term" value="P:translation"/>
    <property type="evidence" value="ECO:0007669"/>
    <property type="project" value="UniProtKB-UniRule"/>
</dbReference>
<dbReference type="FunFam" id="3.30.70.600:FF:000001">
    <property type="entry name" value="30S ribosomal protein S10"/>
    <property type="match status" value="1"/>
</dbReference>
<dbReference type="Gene3D" id="3.30.70.600">
    <property type="entry name" value="Ribosomal protein S10 domain"/>
    <property type="match status" value="1"/>
</dbReference>
<dbReference type="HAMAP" id="MF_00508">
    <property type="entry name" value="Ribosomal_uS10"/>
    <property type="match status" value="1"/>
</dbReference>
<dbReference type="InterPro" id="IPR001848">
    <property type="entry name" value="Ribosomal_uS10"/>
</dbReference>
<dbReference type="InterPro" id="IPR018268">
    <property type="entry name" value="Ribosomal_uS10_CS"/>
</dbReference>
<dbReference type="InterPro" id="IPR027486">
    <property type="entry name" value="Ribosomal_uS10_dom"/>
</dbReference>
<dbReference type="InterPro" id="IPR036838">
    <property type="entry name" value="Ribosomal_uS10_dom_sf"/>
</dbReference>
<dbReference type="NCBIfam" id="NF001861">
    <property type="entry name" value="PRK00596.1"/>
    <property type="match status" value="1"/>
</dbReference>
<dbReference type="NCBIfam" id="TIGR01049">
    <property type="entry name" value="rpsJ_bact"/>
    <property type="match status" value="1"/>
</dbReference>
<dbReference type="PANTHER" id="PTHR11700">
    <property type="entry name" value="30S RIBOSOMAL PROTEIN S10 FAMILY MEMBER"/>
    <property type="match status" value="1"/>
</dbReference>
<dbReference type="Pfam" id="PF00338">
    <property type="entry name" value="Ribosomal_S10"/>
    <property type="match status" value="1"/>
</dbReference>
<dbReference type="PRINTS" id="PR00971">
    <property type="entry name" value="RIBOSOMALS10"/>
</dbReference>
<dbReference type="SMART" id="SM01403">
    <property type="entry name" value="Ribosomal_S10"/>
    <property type="match status" value="1"/>
</dbReference>
<dbReference type="SUPFAM" id="SSF54999">
    <property type="entry name" value="Ribosomal protein S10"/>
    <property type="match status" value="1"/>
</dbReference>
<dbReference type="PROSITE" id="PS00361">
    <property type="entry name" value="RIBOSOMAL_S10"/>
    <property type="match status" value="1"/>
</dbReference>
<name>RS10_STAAW</name>
<feature type="chain" id="PRO_0000146599" description="Small ribosomal subunit protein uS10">
    <location>
        <begin position="1"/>
        <end position="102"/>
    </location>
</feature>
<accession>P66335</accession>
<accession>Q99S20</accession>
<gene>
    <name evidence="1" type="primary">rpsJ</name>
    <name type="ordered locus">MW2170</name>
</gene>
<comment type="function">
    <text evidence="1">Involved in the binding of tRNA to the ribosomes.</text>
</comment>
<comment type="subunit">
    <text evidence="1">Part of the 30S ribosomal subunit.</text>
</comment>
<comment type="similarity">
    <text evidence="1">Belongs to the universal ribosomal protein uS10 family.</text>
</comment>
<reference key="1">
    <citation type="journal article" date="2002" name="Lancet">
        <title>Genome and virulence determinants of high virulence community-acquired MRSA.</title>
        <authorList>
            <person name="Baba T."/>
            <person name="Takeuchi F."/>
            <person name="Kuroda M."/>
            <person name="Yuzawa H."/>
            <person name="Aoki K."/>
            <person name="Oguchi A."/>
            <person name="Nagai Y."/>
            <person name="Iwama N."/>
            <person name="Asano K."/>
            <person name="Naimi T."/>
            <person name="Kuroda H."/>
            <person name="Cui L."/>
            <person name="Yamamoto K."/>
            <person name="Hiramatsu K."/>
        </authorList>
    </citation>
    <scope>NUCLEOTIDE SEQUENCE [LARGE SCALE GENOMIC DNA]</scope>
    <source>
        <strain>MW2</strain>
    </source>
</reference>